<evidence type="ECO:0000250" key="1"/>
<evidence type="ECO:0000255" key="2"/>
<evidence type="ECO:0000255" key="3">
    <source>
        <dbReference type="PROSITE-ProRule" id="PRU00521"/>
    </source>
</evidence>
<reference key="1">
    <citation type="journal article" date="1994" name="Proc. Natl. Acad. Sci. U.S.A.">
        <title>D1A, D1B, and D1C dopamine receptors from Xenopus laevis.</title>
        <authorList>
            <person name="Sugamori K.S."/>
            <person name="Demchyshyn L.L."/>
            <person name="Chung M."/>
            <person name="Niznik H.B."/>
        </authorList>
    </citation>
    <scope>NUCLEOTIDE SEQUENCE [GENOMIC DNA]</scope>
</reference>
<organism>
    <name type="scientific">Xenopus laevis</name>
    <name type="common">African clawed frog</name>
    <dbReference type="NCBI Taxonomy" id="8355"/>
    <lineage>
        <taxon>Eukaryota</taxon>
        <taxon>Metazoa</taxon>
        <taxon>Chordata</taxon>
        <taxon>Craniata</taxon>
        <taxon>Vertebrata</taxon>
        <taxon>Euteleostomi</taxon>
        <taxon>Amphibia</taxon>
        <taxon>Batrachia</taxon>
        <taxon>Anura</taxon>
        <taxon>Pipoidea</taxon>
        <taxon>Pipidae</taxon>
        <taxon>Xenopodinae</taxon>
        <taxon>Xenopus</taxon>
        <taxon>Xenopus</taxon>
    </lineage>
</organism>
<proteinExistence type="evidence at transcript level"/>
<name>DRD5_XENLA</name>
<keyword id="KW-1003">Cell membrane</keyword>
<keyword id="KW-1015">Disulfide bond</keyword>
<keyword id="KW-0297">G-protein coupled receptor</keyword>
<keyword id="KW-0325">Glycoprotein</keyword>
<keyword id="KW-0449">Lipoprotein</keyword>
<keyword id="KW-0472">Membrane</keyword>
<keyword id="KW-0564">Palmitate</keyword>
<keyword id="KW-0675">Receptor</keyword>
<keyword id="KW-1185">Reference proteome</keyword>
<keyword id="KW-0807">Transducer</keyword>
<keyword id="KW-0812">Transmembrane</keyword>
<keyword id="KW-1133">Transmembrane helix</keyword>
<dbReference type="EMBL" id="U07864">
    <property type="protein sequence ID" value="AAA50829.1"/>
    <property type="molecule type" value="Genomic_DNA"/>
</dbReference>
<dbReference type="PIR" id="I51660">
    <property type="entry name" value="I51660"/>
</dbReference>
<dbReference type="RefSeq" id="XP_018098149.1">
    <property type="nucleotide sequence ID" value="XM_018242660.1"/>
</dbReference>
<dbReference type="SMR" id="P42290"/>
<dbReference type="GlyCosmos" id="P42290">
    <property type="glycosylation" value="1 site, No reported glycans"/>
</dbReference>
<dbReference type="GeneID" id="108705891"/>
<dbReference type="KEGG" id="xla:108705891"/>
<dbReference type="AGR" id="Xenbase:XB-GENE-6500261"/>
<dbReference type="CTD" id="108705891"/>
<dbReference type="Xenbase" id="XB-GENE-6500261">
    <property type="gene designation" value="drd5.S"/>
</dbReference>
<dbReference type="OMA" id="SLGEIMW"/>
<dbReference type="OrthoDB" id="6021915at2759"/>
<dbReference type="Proteomes" id="UP000186698">
    <property type="component" value="Chromosome 1S"/>
</dbReference>
<dbReference type="Bgee" id="108705891">
    <property type="expression patterns" value="Expressed in camera-type eye and 2 other cell types or tissues"/>
</dbReference>
<dbReference type="GO" id="GO:0005886">
    <property type="term" value="C:plasma membrane"/>
    <property type="evidence" value="ECO:0000318"/>
    <property type="project" value="GO_Central"/>
</dbReference>
<dbReference type="GO" id="GO:0045202">
    <property type="term" value="C:synapse"/>
    <property type="evidence" value="ECO:0007669"/>
    <property type="project" value="GOC"/>
</dbReference>
<dbReference type="GO" id="GO:0001588">
    <property type="term" value="F:dopamine neurotransmitter receptor activity, coupled via Gs"/>
    <property type="evidence" value="ECO:0000318"/>
    <property type="project" value="GO_Central"/>
</dbReference>
<dbReference type="GO" id="GO:0004930">
    <property type="term" value="F:G protein-coupled receptor activity"/>
    <property type="evidence" value="ECO:0000318"/>
    <property type="project" value="GO_Central"/>
</dbReference>
<dbReference type="GO" id="GO:0071880">
    <property type="term" value="P:adenylate cyclase-activating adrenergic receptor signaling pathway"/>
    <property type="evidence" value="ECO:0000318"/>
    <property type="project" value="GO_Central"/>
</dbReference>
<dbReference type="GO" id="GO:0007212">
    <property type="term" value="P:G protein-coupled dopamine receptor signaling pathway"/>
    <property type="evidence" value="ECO:0000318"/>
    <property type="project" value="GO_Central"/>
</dbReference>
<dbReference type="GO" id="GO:0043410">
    <property type="term" value="P:positive regulation of MAPK cascade"/>
    <property type="evidence" value="ECO:0000318"/>
    <property type="project" value="GO_Central"/>
</dbReference>
<dbReference type="CDD" id="cd15319">
    <property type="entry name" value="7tmA_D1B_dopamine_R"/>
    <property type="match status" value="1"/>
</dbReference>
<dbReference type="FunFam" id="1.20.1070.10:FF:000045">
    <property type="entry name" value="D(1A) dopamine receptor"/>
    <property type="match status" value="1"/>
</dbReference>
<dbReference type="Gene3D" id="1.20.1070.10">
    <property type="entry name" value="Rhodopsin 7-helix transmembrane proteins"/>
    <property type="match status" value="1"/>
</dbReference>
<dbReference type="InterPro" id="IPR000497">
    <property type="entry name" value="Dopamine_D5_rcpt"/>
</dbReference>
<dbReference type="InterPro" id="IPR000929">
    <property type="entry name" value="Dopamine_rcpt"/>
</dbReference>
<dbReference type="InterPro" id="IPR000276">
    <property type="entry name" value="GPCR_Rhodpsn"/>
</dbReference>
<dbReference type="InterPro" id="IPR017452">
    <property type="entry name" value="GPCR_Rhodpsn_7TM"/>
</dbReference>
<dbReference type="PANTHER" id="PTHR24248">
    <property type="entry name" value="ADRENERGIC RECEPTOR-RELATED G-PROTEIN COUPLED RECEPTOR"/>
    <property type="match status" value="1"/>
</dbReference>
<dbReference type="PANTHER" id="PTHR24248:SF136">
    <property type="entry name" value="D(1B) DOPAMINE RECEPTOR"/>
    <property type="match status" value="1"/>
</dbReference>
<dbReference type="Pfam" id="PF00001">
    <property type="entry name" value="7tm_1"/>
    <property type="match status" value="1"/>
</dbReference>
<dbReference type="PRINTS" id="PR00566">
    <property type="entry name" value="DOPAMINED1BR"/>
</dbReference>
<dbReference type="PRINTS" id="PR00242">
    <property type="entry name" value="DOPAMINER"/>
</dbReference>
<dbReference type="PRINTS" id="PR00237">
    <property type="entry name" value="GPCRRHODOPSN"/>
</dbReference>
<dbReference type="SMART" id="SM01381">
    <property type="entry name" value="7TM_GPCR_Srsx"/>
    <property type="match status" value="1"/>
</dbReference>
<dbReference type="SUPFAM" id="SSF81321">
    <property type="entry name" value="Family A G protein-coupled receptor-like"/>
    <property type="match status" value="1"/>
</dbReference>
<dbReference type="PROSITE" id="PS00237">
    <property type="entry name" value="G_PROTEIN_RECEP_F1_1"/>
    <property type="match status" value="1"/>
</dbReference>
<dbReference type="PROSITE" id="PS50262">
    <property type="entry name" value="G_PROTEIN_RECEP_F1_2"/>
    <property type="match status" value="1"/>
</dbReference>
<protein>
    <recommendedName>
        <fullName>D(1B) dopamine receptor</fullName>
    </recommendedName>
    <alternativeName>
        <fullName>D(5) dopamine receptor</fullName>
    </alternativeName>
    <alternativeName>
        <fullName>Dopamine D5 receptor</fullName>
    </alternativeName>
</protein>
<gene>
    <name type="primary">drd5</name>
</gene>
<comment type="function">
    <text>Dopamine receptor whose activity is mediated by G proteins which activate adenylyl cyclase.</text>
</comment>
<comment type="subcellular location">
    <subcellularLocation>
        <location>Cell membrane</location>
        <topology>Multi-pass membrane protein</topology>
    </subcellularLocation>
</comment>
<comment type="tissue specificity">
    <text>Brain and kidney.</text>
</comment>
<comment type="similarity">
    <text evidence="3">Belongs to the G-protein coupled receptor 1 family.</text>
</comment>
<sequence>MYQPFQHLDSDQVASWQSPEMLMNKSVSRESQRRKELVAGQIVTGSLLLLLIFWTLFGNILVCTAVMRFRHLRSRVTNIFIVSLAVSDLLVALLVMPWKAVAEVAGHWPFGAFCDIWVAFDIMCSTASILNLCVISVDRYWAISSPFRYERKMTQRVALLMISTAWALSVLISFIPVQLSWHKSETEDHLLSNHSTGNCDSSLNRTYAISSSLISFYIPVAIMIVTYTRIYRIAQIQIKRISTLERAAEHAQSCRSNRVDSCSRHHQTSLRTSIKKETKVLKTLSIIMGVFVCCWLPFFILNCMVPFCDRSPGHPQAGLPCVSETTFDIFVWFGWANSSLNPIIYAFNADFRKVFSSLLGCGHWCSTTPVETVNISNELISYNQDTLFHKDIVTAYVNMIPNVVDCIDDNEDAFDHMSQISQTSANNELATDSMCELDSEVDISLHKITPSMSNGIH</sequence>
<accession>P42290</accession>
<feature type="chain" id="PRO_0000069410" description="D(1B) dopamine receptor">
    <location>
        <begin position="1"/>
        <end position="457"/>
    </location>
</feature>
<feature type="topological domain" description="Extracellular" evidence="2">
    <location>
        <begin position="1"/>
        <end position="41"/>
    </location>
</feature>
<feature type="transmembrane region" description="Helical; Name=1" evidence="2">
    <location>
        <begin position="42"/>
        <end position="67"/>
    </location>
</feature>
<feature type="topological domain" description="Cytoplasmic" evidence="2">
    <location>
        <begin position="68"/>
        <end position="78"/>
    </location>
</feature>
<feature type="transmembrane region" description="Helical; Name=2" evidence="2">
    <location>
        <begin position="79"/>
        <end position="105"/>
    </location>
</feature>
<feature type="topological domain" description="Extracellular" evidence="2">
    <location>
        <begin position="106"/>
        <end position="114"/>
    </location>
</feature>
<feature type="transmembrane region" description="Helical; Name=3" evidence="2">
    <location>
        <begin position="115"/>
        <end position="137"/>
    </location>
</feature>
<feature type="topological domain" description="Cytoplasmic" evidence="2">
    <location>
        <begin position="138"/>
        <end position="156"/>
    </location>
</feature>
<feature type="transmembrane region" description="Helical; Name=4" evidence="2">
    <location>
        <begin position="157"/>
        <end position="181"/>
    </location>
</feature>
<feature type="topological domain" description="Extracellular" evidence="2">
    <location>
        <begin position="182"/>
        <end position="205"/>
    </location>
</feature>
<feature type="transmembrane region" description="Helical; Name=5" evidence="2">
    <location>
        <begin position="206"/>
        <end position="231"/>
    </location>
</feature>
<feature type="topological domain" description="Cytoplasmic" evidence="2">
    <location>
        <begin position="232"/>
        <end position="282"/>
    </location>
</feature>
<feature type="transmembrane region" description="Helical; Name=6" evidence="2">
    <location>
        <begin position="283"/>
        <end position="309"/>
    </location>
</feature>
<feature type="topological domain" description="Extracellular" evidence="2">
    <location>
        <begin position="310"/>
        <end position="326"/>
    </location>
</feature>
<feature type="transmembrane region" description="Helical; Name=7" evidence="2">
    <location>
        <begin position="327"/>
        <end position="351"/>
    </location>
</feature>
<feature type="topological domain" description="Cytoplasmic" evidence="2">
    <location>
        <begin position="352"/>
        <end position="457"/>
    </location>
</feature>
<feature type="lipid moiety-binding region" description="S-palmitoyl cysteine" evidence="1">
    <location>
        <position position="361"/>
    </location>
</feature>
<feature type="glycosylation site" description="N-linked (GlcNAc...) asparagine" evidence="2">
    <location>
        <position position="24"/>
    </location>
</feature>
<feature type="disulfide bond" evidence="3">
    <location>
        <begin position="114"/>
        <end position="199"/>
    </location>
</feature>